<organism>
    <name type="scientific">Psychromonas ingrahamii (strain DSM 17664 / CCUG 51855 / 37)</name>
    <dbReference type="NCBI Taxonomy" id="357804"/>
    <lineage>
        <taxon>Bacteria</taxon>
        <taxon>Pseudomonadati</taxon>
        <taxon>Pseudomonadota</taxon>
        <taxon>Gammaproteobacteria</taxon>
        <taxon>Alteromonadales</taxon>
        <taxon>Psychromonadaceae</taxon>
        <taxon>Psychromonas</taxon>
    </lineage>
</organism>
<protein>
    <recommendedName>
        <fullName evidence="1">Glycine dehydrogenase (decarboxylating)</fullName>
        <ecNumber evidence="1">1.4.4.2</ecNumber>
    </recommendedName>
    <alternativeName>
        <fullName evidence="1">Glycine cleavage system P-protein</fullName>
    </alternativeName>
    <alternativeName>
        <fullName evidence="1">Glycine decarboxylase</fullName>
    </alternativeName>
    <alternativeName>
        <fullName evidence="1">Glycine dehydrogenase (aminomethyl-transferring)</fullName>
    </alternativeName>
</protein>
<comment type="function">
    <text evidence="1">The glycine cleavage system catalyzes the degradation of glycine. The P protein binds the alpha-amino group of glycine through its pyridoxal phosphate cofactor; CO(2) is released and the remaining methylamine moiety is then transferred to the lipoamide cofactor of the H protein.</text>
</comment>
<comment type="catalytic activity">
    <reaction evidence="1">
        <text>N(6)-[(R)-lipoyl]-L-lysyl-[glycine-cleavage complex H protein] + glycine + H(+) = N(6)-[(R)-S(8)-aminomethyldihydrolipoyl]-L-lysyl-[glycine-cleavage complex H protein] + CO2</text>
        <dbReference type="Rhea" id="RHEA:24304"/>
        <dbReference type="Rhea" id="RHEA-COMP:10494"/>
        <dbReference type="Rhea" id="RHEA-COMP:10495"/>
        <dbReference type="ChEBI" id="CHEBI:15378"/>
        <dbReference type="ChEBI" id="CHEBI:16526"/>
        <dbReference type="ChEBI" id="CHEBI:57305"/>
        <dbReference type="ChEBI" id="CHEBI:83099"/>
        <dbReference type="ChEBI" id="CHEBI:83143"/>
        <dbReference type="EC" id="1.4.4.2"/>
    </reaction>
</comment>
<comment type="cofactor">
    <cofactor evidence="1">
        <name>pyridoxal 5'-phosphate</name>
        <dbReference type="ChEBI" id="CHEBI:597326"/>
    </cofactor>
</comment>
<comment type="subunit">
    <text evidence="1">The glycine cleavage system is composed of four proteins: P, T, L and H.</text>
</comment>
<comment type="similarity">
    <text evidence="1">Belongs to the GcvP family.</text>
</comment>
<proteinExistence type="inferred from homology"/>
<accession>A1SY74</accession>
<dbReference type="EC" id="1.4.4.2" evidence="1"/>
<dbReference type="EMBL" id="CP000510">
    <property type="protein sequence ID" value="ABM04439.1"/>
    <property type="molecule type" value="Genomic_DNA"/>
</dbReference>
<dbReference type="RefSeq" id="WP_011770994.1">
    <property type="nucleotide sequence ID" value="NC_008709.1"/>
</dbReference>
<dbReference type="SMR" id="A1SY74"/>
<dbReference type="STRING" id="357804.Ping_2729"/>
<dbReference type="KEGG" id="pin:Ping_2729"/>
<dbReference type="eggNOG" id="COG0403">
    <property type="taxonomic scope" value="Bacteria"/>
</dbReference>
<dbReference type="eggNOG" id="COG1003">
    <property type="taxonomic scope" value="Bacteria"/>
</dbReference>
<dbReference type="HOGENOM" id="CLU_004620_1_1_6"/>
<dbReference type="OrthoDB" id="9801272at2"/>
<dbReference type="Proteomes" id="UP000000639">
    <property type="component" value="Chromosome"/>
</dbReference>
<dbReference type="GO" id="GO:0005829">
    <property type="term" value="C:cytosol"/>
    <property type="evidence" value="ECO:0007669"/>
    <property type="project" value="TreeGrafter"/>
</dbReference>
<dbReference type="GO" id="GO:0005960">
    <property type="term" value="C:glycine cleavage complex"/>
    <property type="evidence" value="ECO:0007669"/>
    <property type="project" value="TreeGrafter"/>
</dbReference>
<dbReference type="GO" id="GO:0016594">
    <property type="term" value="F:glycine binding"/>
    <property type="evidence" value="ECO:0007669"/>
    <property type="project" value="TreeGrafter"/>
</dbReference>
<dbReference type="GO" id="GO:0004375">
    <property type="term" value="F:glycine dehydrogenase (decarboxylating) activity"/>
    <property type="evidence" value="ECO:0007669"/>
    <property type="project" value="UniProtKB-EC"/>
</dbReference>
<dbReference type="GO" id="GO:0030170">
    <property type="term" value="F:pyridoxal phosphate binding"/>
    <property type="evidence" value="ECO:0007669"/>
    <property type="project" value="TreeGrafter"/>
</dbReference>
<dbReference type="GO" id="GO:0019464">
    <property type="term" value="P:glycine decarboxylation via glycine cleavage system"/>
    <property type="evidence" value="ECO:0007669"/>
    <property type="project" value="UniProtKB-UniRule"/>
</dbReference>
<dbReference type="CDD" id="cd00613">
    <property type="entry name" value="GDC-P"/>
    <property type="match status" value="2"/>
</dbReference>
<dbReference type="FunFam" id="3.40.640.10:FF:000005">
    <property type="entry name" value="Glycine dehydrogenase (decarboxylating), mitochondrial"/>
    <property type="match status" value="1"/>
</dbReference>
<dbReference type="FunFam" id="3.90.1150.10:FF:000007">
    <property type="entry name" value="Glycine dehydrogenase (decarboxylating), mitochondrial"/>
    <property type="match status" value="1"/>
</dbReference>
<dbReference type="FunFam" id="3.40.640.10:FF:000007">
    <property type="entry name" value="glycine dehydrogenase (Decarboxylating), mitochondrial"/>
    <property type="match status" value="1"/>
</dbReference>
<dbReference type="Gene3D" id="3.90.1150.10">
    <property type="entry name" value="Aspartate Aminotransferase, domain 1"/>
    <property type="match status" value="2"/>
</dbReference>
<dbReference type="Gene3D" id="3.40.640.10">
    <property type="entry name" value="Type I PLP-dependent aspartate aminotransferase-like (Major domain)"/>
    <property type="match status" value="2"/>
</dbReference>
<dbReference type="HAMAP" id="MF_00711">
    <property type="entry name" value="GcvP"/>
    <property type="match status" value="1"/>
</dbReference>
<dbReference type="InterPro" id="IPR003437">
    <property type="entry name" value="GcvP"/>
</dbReference>
<dbReference type="InterPro" id="IPR049316">
    <property type="entry name" value="GDC-P_C"/>
</dbReference>
<dbReference type="InterPro" id="IPR049315">
    <property type="entry name" value="GDC-P_N"/>
</dbReference>
<dbReference type="InterPro" id="IPR020581">
    <property type="entry name" value="GDC_P"/>
</dbReference>
<dbReference type="InterPro" id="IPR015424">
    <property type="entry name" value="PyrdxlP-dep_Trfase"/>
</dbReference>
<dbReference type="InterPro" id="IPR015421">
    <property type="entry name" value="PyrdxlP-dep_Trfase_major"/>
</dbReference>
<dbReference type="InterPro" id="IPR015422">
    <property type="entry name" value="PyrdxlP-dep_Trfase_small"/>
</dbReference>
<dbReference type="NCBIfam" id="TIGR00461">
    <property type="entry name" value="gcvP"/>
    <property type="match status" value="1"/>
</dbReference>
<dbReference type="NCBIfam" id="NF001696">
    <property type="entry name" value="PRK00451.1"/>
    <property type="match status" value="1"/>
</dbReference>
<dbReference type="PANTHER" id="PTHR11773:SF1">
    <property type="entry name" value="GLYCINE DEHYDROGENASE (DECARBOXYLATING), MITOCHONDRIAL"/>
    <property type="match status" value="1"/>
</dbReference>
<dbReference type="PANTHER" id="PTHR11773">
    <property type="entry name" value="GLYCINE DEHYDROGENASE, DECARBOXYLATING"/>
    <property type="match status" value="1"/>
</dbReference>
<dbReference type="Pfam" id="PF21478">
    <property type="entry name" value="GcvP2_C"/>
    <property type="match status" value="1"/>
</dbReference>
<dbReference type="Pfam" id="PF02347">
    <property type="entry name" value="GDC-P"/>
    <property type="match status" value="2"/>
</dbReference>
<dbReference type="SUPFAM" id="SSF53383">
    <property type="entry name" value="PLP-dependent transferases"/>
    <property type="match status" value="2"/>
</dbReference>
<reference key="1">
    <citation type="journal article" date="2008" name="BMC Genomics">
        <title>Genomics of an extreme psychrophile, Psychromonas ingrahamii.</title>
        <authorList>
            <person name="Riley M."/>
            <person name="Staley J.T."/>
            <person name="Danchin A."/>
            <person name="Wang T.Z."/>
            <person name="Brettin T.S."/>
            <person name="Hauser L.J."/>
            <person name="Land M.L."/>
            <person name="Thompson L.S."/>
        </authorList>
    </citation>
    <scope>NUCLEOTIDE SEQUENCE [LARGE SCALE GENOMIC DNA]</scope>
    <source>
        <strain>DSM 17664 / CCUG 51855 / 37</strain>
    </source>
</reference>
<keyword id="KW-0560">Oxidoreductase</keyword>
<keyword id="KW-0663">Pyridoxal phosphate</keyword>
<keyword id="KW-1185">Reference proteome</keyword>
<gene>
    <name evidence="1" type="primary">gcvP</name>
    <name type="ordered locus">Ping_2729</name>
</gene>
<sequence>MTDTTLLDLLSDSKEFATRHNGSGAAQQKKMLETIGVQSIEQLIDQTVPAAIRLPEKMKLAEPQSESMTLASLKAIAEKNIVNRSFIGQGYYNTLLPNVILRNVLENPGWYTAYTPYQPEISQGRLESLLNYQQMVMDLTAMEIANASLLDEATAAAESMTLCKRAGKSKSLAFFVADGIHPQTVDVVRTRAEFFGYEIISGSMEDLDNHDLFGALLQYPSTTGNIQDLTAIIEKAHAKKTLVSVASDLLALTLLKAPGEMGADIVIGSAQRFGIPMGFGGPHAGFMATKEKFKRTMPGRIIGVSKDSKGKPALRMAMQTREQHIRREKATSNICTAQALLANMSAFYALYHGPEGLRKIARRVHHLTAILVAGLRSEGFELANQHFFDTITLNSNEHSKAIYHRALAEGMNLRKFPTPDNMPVQLGISLDETTTITDVEDLLRVITGKALSSAGFAAQVAEDEFAGIPATCRRRSKYLTHPIFNEHHSETQMMRYMKKLENKDYSLTHGMIPLGCCTMKLNAAALMLPVSWPEFSQMHPFAPTEQSFGYQELAEKLSKMLCEVTGYDGFSLQPNSGAQGEYAGLIAIHRYHQSNGEDQRNICLIPSSAHGTNPATASMLSMKVVVVGCDQQGNIDHADLKAKIDKHRDNLSCIMVTYPSTHGIYEEGIQEICEWVHEAGGQVYLDGANMNAQIGLTSPGFIGSDVSHLNLHKTFCIPHGGGGPGMGPIGVKKHLIPFLPGHIEVTESADNKHYAVSAAELGSASILPISYAYIAMMGEQGLTSATQIAILNANYIMERLRPHYPILYQGKEGRVAHECIIDIRPLEAASGISNEDIAKRLMDYGFHAPTMSFPVGGTFMIEPTESESTAELDRFCDAMIAIRHEIKQIEDGEWSATDNPLVNAPHTQVDLMESEWTHGYSRELACFPSKHSKDSKYWPTVNRVDNVFGDRNLICSCPSIESYMEE</sequence>
<evidence type="ECO:0000255" key="1">
    <source>
        <dbReference type="HAMAP-Rule" id="MF_00711"/>
    </source>
</evidence>
<feature type="chain" id="PRO_1000045597" description="Glycine dehydrogenase (decarboxylating)">
    <location>
        <begin position="1"/>
        <end position="966"/>
    </location>
</feature>
<feature type="modified residue" description="N6-(pyridoxal phosphate)lysine" evidence="1">
    <location>
        <position position="713"/>
    </location>
</feature>
<name>GCSP_PSYIN</name>